<feature type="chain" id="PRO_0000381191" description="Biotin synthase">
    <location>
        <begin position="1"/>
        <end position="331"/>
    </location>
</feature>
<feature type="domain" description="Radical SAM core" evidence="2">
    <location>
        <begin position="43"/>
        <end position="267"/>
    </location>
</feature>
<feature type="binding site" evidence="1">
    <location>
        <position position="58"/>
    </location>
    <ligand>
        <name>[4Fe-4S] cluster</name>
        <dbReference type="ChEBI" id="CHEBI:49883"/>
        <note>4Fe-4S-S-AdoMet</note>
    </ligand>
</feature>
<feature type="binding site" evidence="1">
    <location>
        <position position="62"/>
    </location>
    <ligand>
        <name>[4Fe-4S] cluster</name>
        <dbReference type="ChEBI" id="CHEBI:49883"/>
        <note>4Fe-4S-S-AdoMet</note>
    </ligand>
</feature>
<feature type="binding site" evidence="1">
    <location>
        <position position="65"/>
    </location>
    <ligand>
        <name>[4Fe-4S] cluster</name>
        <dbReference type="ChEBI" id="CHEBI:49883"/>
        <note>4Fe-4S-S-AdoMet</note>
    </ligand>
</feature>
<feature type="binding site" evidence="1">
    <location>
        <position position="102"/>
    </location>
    <ligand>
        <name>[2Fe-2S] cluster</name>
        <dbReference type="ChEBI" id="CHEBI:190135"/>
    </ligand>
</feature>
<feature type="binding site" evidence="1">
    <location>
        <position position="133"/>
    </location>
    <ligand>
        <name>[2Fe-2S] cluster</name>
        <dbReference type="ChEBI" id="CHEBI:190135"/>
    </ligand>
</feature>
<feature type="binding site" evidence="1">
    <location>
        <position position="193"/>
    </location>
    <ligand>
        <name>[2Fe-2S] cluster</name>
        <dbReference type="ChEBI" id="CHEBI:190135"/>
    </ligand>
</feature>
<feature type="binding site" evidence="1">
    <location>
        <position position="265"/>
    </location>
    <ligand>
        <name>[2Fe-2S] cluster</name>
        <dbReference type="ChEBI" id="CHEBI:190135"/>
    </ligand>
</feature>
<organism>
    <name type="scientific">Alkalilimnicola ehrlichii (strain ATCC BAA-1101 / DSM 17681 / MLHE-1)</name>
    <dbReference type="NCBI Taxonomy" id="187272"/>
    <lineage>
        <taxon>Bacteria</taxon>
        <taxon>Pseudomonadati</taxon>
        <taxon>Pseudomonadota</taxon>
        <taxon>Gammaproteobacteria</taxon>
        <taxon>Chromatiales</taxon>
        <taxon>Ectothiorhodospiraceae</taxon>
        <taxon>Alkalilimnicola</taxon>
    </lineage>
</organism>
<protein>
    <recommendedName>
        <fullName evidence="1">Biotin synthase</fullName>
        <ecNumber evidence="1">2.8.1.6</ecNumber>
    </recommendedName>
</protein>
<evidence type="ECO:0000255" key="1">
    <source>
        <dbReference type="HAMAP-Rule" id="MF_01694"/>
    </source>
</evidence>
<evidence type="ECO:0000255" key="2">
    <source>
        <dbReference type="PROSITE-ProRule" id="PRU01266"/>
    </source>
</evidence>
<evidence type="ECO:0000305" key="3"/>
<name>BIOB_ALKEH</name>
<accession>Q0A5W1</accession>
<dbReference type="EC" id="2.8.1.6" evidence="1"/>
<dbReference type="EMBL" id="CP000453">
    <property type="protein sequence ID" value="ABI57776.1"/>
    <property type="status" value="ALT_INIT"/>
    <property type="molecule type" value="Genomic_DNA"/>
</dbReference>
<dbReference type="SMR" id="Q0A5W1"/>
<dbReference type="KEGG" id="aeh:Mlg_2436"/>
<dbReference type="eggNOG" id="COG0502">
    <property type="taxonomic scope" value="Bacteria"/>
</dbReference>
<dbReference type="HOGENOM" id="CLU_033172_1_2_6"/>
<dbReference type="OrthoDB" id="9786826at2"/>
<dbReference type="UniPathway" id="UPA00078">
    <property type="reaction ID" value="UER00162"/>
</dbReference>
<dbReference type="Proteomes" id="UP000001962">
    <property type="component" value="Chromosome"/>
</dbReference>
<dbReference type="GO" id="GO:0051537">
    <property type="term" value="F:2 iron, 2 sulfur cluster binding"/>
    <property type="evidence" value="ECO:0007669"/>
    <property type="project" value="UniProtKB-KW"/>
</dbReference>
<dbReference type="GO" id="GO:0051539">
    <property type="term" value="F:4 iron, 4 sulfur cluster binding"/>
    <property type="evidence" value="ECO:0007669"/>
    <property type="project" value="UniProtKB-KW"/>
</dbReference>
<dbReference type="GO" id="GO:0004076">
    <property type="term" value="F:biotin synthase activity"/>
    <property type="evidence" value="ECO:0007669"/>
    <property type="project" value="UniProtKB-UniRule"/>
</dbReference>
<dbReference type="GO" id="GO:0005506">
    <property type="term" value="F:iron ion binding"/>
    <property type="evidence" value="ECO:0007669"/>
    <property type="project" value="UniProtKB-UniRule"/>
</dbReference>
<dbReference type="GO" id="GO:0009102">
    <property type="term" value="P:biotin biosynthetic process"/>
    <property type="evidence" value="ECO:0007669"/>
    <property type="project" value="UniProtKB-UniRule"/>
</dbReference>
<dbReference type="CDD" id="cd01335">
    <property type="entry name" value="Radical_SAM"/>
    <property type="match status" value="1"/>
</dbReference>
<dbReference type="FunFam" id="3.20.20.70:FF:000011">
    <property type="entry name" value="Biotin synthase"/>
    <property type="match status" value="1"/>
</dbReference>
<dbReference type="Gene3D" id="3.20.20.70">
    <property type="entry name" value="Aldolase class I"/>
    <property type="match status" value="1"/>
</dbReference>
<dbReference type="HAMAP" id="MF_01694">
    <property type="entry name" value="BioB"/>
    <property type="match status" value="1"/>
</dbReference>
<dbReference type="InterPro" id="IPR013785">
    <property type="entry name" value="Aldolase_TIM"/>
</dbReference>
<dbReference type="InterPro" id="IPR010722">
    <property type="entry name" value="BATS_dom"/>
</dbReference>
<dbReference type="InterPro" id="IPR002684">
    <property type="entry name" value="Biotin_synth/BioAB"/>
</dbReference>
<dbReference type="InterPro" id="IPR024177">
    <property type="entry name" value="Biotin_synthase"/>
</dbReference>
<dbReference type="InterPro" id="IPR006638">
    <property type="entry name" value="Elp3/MiaA/NifB-like_rSAM"/>
</dbReference>
<dbReference type="InterPro" id="IPR007197">
    <property type="entry name" value="rSAM"/>
</dbReference>
<dbReference type="NCBIfam" id="TIGR00433">
    <property type="entry name" value="bioB"/>
    <property type="match status" value="1"/>
</dbReference>
<dbReference type="PANTHER" id="PTHR22976">
    <property type="entry name" value="BIOTIN SYNTHASE"/>
    <property type="match status" value="1"/>
</dbReference>
<dbReference type="PANTHER" id="PTHR22976:SF2">
    <property type="entry name" value="BIOTIN SYNTHASE, MITOCHONDRIAL"/>
    <property type="match status" value="1"/>
</dbReference>
<dbReference type="Pfam" id="PF06968">
    <property type="entry name" value="BATS"/>
    <property type="match status" value="1"/>
</dbReference>
<dbReference type="Pfam" id="PF04055">
    <property type="entry name" value="Radical_SAM"/>
    <property type="match status" value="1"/>
</dbReference>
<dbReference type="PIRSF" id="PIRSF001619">
    <property type="entry name" value="Biotin_synth"/>
    <property type="match status" value="1"/>
</dbReference>
<dbReference type="SFLD" id="SFLDG01060">
    <property type="entry name" value="BATS_domain_containing"/>
    <property type="match status" value="1"/>
</dbReference>
<dbReference type="SFLD" id="SFLDF00272">
    <property type="entry name" value="biotin_synthase"/>
    <property type="match status" value="1"/>
</dbReference>
<dbReference type="SMART" id="SM00876">
    <property type="entry name" value="BATS"/>
    <property type="match status" value="1"/>
</dbReference>
<dbReference type="SMART" id="SM00729">
    <property type="entry name" value="Elp3"/>
    <property type="match status" value="1"/>
</dbReference>
<dbReference type="SUPFAM" id="SSF102114">
    <property type="entry name" value="Radical SAM enzymes"/>
    <property type="match status" value="1"/>
</dbReference>
<dbReference type="PROSITE" id="PS51918">
    <property type="entry name" value="RADICAL_SAM"/>
    <property type="match status" value="1"/>
</dbReference>
<reference key="1">
    <citation type="submission" date="2006-08" db="EMBL/GenBank/DDBJ databases">
        <title>Complete sequence of Alkalilimnicola ehrilichei MLHE-1.</title>
        <authorList>
            <person name="Copeland A."/>
            <person name="Lucas S."/>
            <person name="Lapidus A."/>
            <person name="Barry K."/>
            <person name="Detter J.C."/>
            <person name="Glavina del Rio T."/>
            <person name="Hammon N."/>
            <person name="Israni S."/>
            <person name="Dalin E."/>
            <person name="Tice H."/>
            <person name="Pitluck S."/>
            <person name="Sims D."/>
            <person name="Brettin T."/>
            <person name="Bruce D."/>
            <person name="Han C."/>
            <person name="Tapia R."/>
            <person name="Gilna P."/>
            <person name="Schmutz J."/>
            <person name="Larimer F."/>
            <person name="Land M."/>
            <person name="Hauser L."/>
            <person name="Kyrpides N."/>
            <person name="Mikhailova N."/>
            <person name="Oremland R.S."/>
            <person name="Hoeft S.E."/>
            <person name="Switzer-Blum J."/>
            <person name="Kulp T."/>
            <person name="King G."/>
            <person name="Tabita R."/>
            <person name="Witte B."/>
            <person name="Santini J.M."/>
            <person name="Basu P."/>
            <person name="Hollibaugh J.T."/>
            <person name="Xie G."/>
            <person name="Stolz J.F."/>
            <person name="Richardson P."/>
        </authorList>
    </citation>
    <scope>NUCLEOTIDE SEQUENCE [LARGE SCALE GENOMIC DNA]</scope>
    <source>
        <strain>ATCC BAA-1101 / DSM 17681 / MLHE-1</strain>
    </source>
</reference>
<gene>
    <name evidence="1" type="primary">bioB</name>
    <name type="ordered locus">Mlg_2436</name>
</gene>
<proteinExistence type="inferred from homology"/>
<sequence>MTATTQTPRHDWSKDEVLALFEQPFNDLLHQAQTTHRAHFDPNTVQVSTLLSIKTGACPEDCKYCPQSVRYDTGLEREQILAVEEVVAAARRARDAGATRFCMGAAWRSPKDRDLETVEAMVREVKALGLETCLTLGMLRDGQAERLREAGLDYYNHNLDTSEDYYDEIITTRSYQDRLDTLARVRDAGLKTCCGGIIGMGETRQDRAELLRTLASLPVQPQSVPINQLVQVPGTPLHGVEPPDPFEFVRTIAVARILMPASYVRLSAGREQMSDELQALCFLAGANSIFYGDKLLTTGNPEADKDRRLLARLGMGFEAHACAQAEAEDLG</sequence>
<comment type="function">
    <text evidence="1">Catalyzes the conversion of dethiobiotin (DTB) to biotin by the insertion of a sulfur atom into dethiobiotin via a radical-based mechanism.</text>
</comment>
<comment type="catalytic activity">
    <reaction evidence="1">
        <text>(4R,5S)-dethiobiotin + (sulfur carrier)-SH + 2 reduced [2Fe-2S]-[ferredoxin] + 2 S-adenosyl-L-methionine = (sulfur carrier)-H + biotin + 2 5'-deoxyadenosine + 2 L-methionine + 2 oxidized [2Fe-2S]-[ferredoxin]</text>
        <dbReference type="Rhea" id="RHEA:22060"/>
        <dbReference type="Rhea" id="RHEA-COMP:10000"/>
        <dbReference type="Rhea" id="RHEA-COMP:10001"/>
        <dbReference type="Rhea" id="RHEA-COMP:14737"/>
        <dbReference type="Rhea" id="RHEA-COMP:14739"/>
        <dbReference type="ChEBI" id="CHEBI:17319"/>
        <dbReference type="ChEBI" id="CHEBI:29917"/>
        <dbReference type="ChEBI" id="CHEBI:33737"/>
        <dbReference type="ChEBI" id="CHEBI:33738"/>
        <dbReference type="ChEBI" id="CHEBI:57586"/>
        <dbReference type="ChEBI" id="CHEBI:57844"/>
        <dbReference type="ChEBI" id="CHEBI:59789"/>
        <dbReference type="ChEBI" id="CHEBI:64428"/>
        <dbReference type="ChEBI" id="CHEBI:149473"/>
        <dbReference type="EC" id="2.8.1.6"/>
    </reaction>
</comment>
<comment type="cofactor">
    <cofactor evidence="1">
        <name>[4Fe-4S] cluster</name>
        <dbReference type="ChEBI" id="CHEBI:49883"/>
    </cofactor>
    <text evidence="1">Binds 1 [4Fe-4S] cluster. The cluster is coordinated with 3 cysteines and an exchangeable S-adenosyl-L-methionine.</text>
</comment>
<comment type="cofactor">
    <cofactor evidence="1">
        <name>[2Fe-2S] cluster</name>
        <dbReference type="ChEBI" id="CHEBI:190135"/>
    </cofactor>
    <text evidence="1">Binds 1 [2Fe-2S] cluster. The cluster is coordinated with 3 cysteines and 1 arginine.</text>
</comment>
<comment type="pathway">
    <text evidence="1">Cofactor biosynthesis; biotin biosynthesis; biotin from 7,8-diaminononanoate: step 2/2.</text>
</comment>
<comment type="subunit">
    <text evidence="1">Homodimer.</text>
</comment>
<comment type="similarity">
    <text evidence="1">Belongs to the radical SAM superfamily. Biotin synthase family.</text>
</comment>
<comment type="sequence caution" evidence="3">
    <conflict type="erroneous initiation">
        <sequence resource="EMBL-CDS" id="ABI57776"/>
    </conflict>
</comment>
<keyword id="KW-0001">2Fe-2S</keyword>
<keyword id="KW-0004">4Fe-4S</keyword>
<keyword id="KW-0093">Biotin biosynthesis</keyword>
<keyword id="KW-0408">Iron</keyword>
<keyword id="KW-0411">Iron-sulfur</keyword>
<keyword id="KW-0479">Metal-binding</keyword>
<keyword id="KW-1185">Reference proteome</keyword>
<keyword id="KW-0949">S-adenosyl-L-methionine</keyword>
<keyword id="KW-0808">Transferase</keyword>